<organism>
    <name type="scientific">Oncorhynchus mykiss</name>
    <name type="common">Rainbow trout</name>
    <name type="synonym">Salmo gairdneri</name>
    <dbReference type="NCBI Taxonomy" id="8022"/>
    <lineage>
        <taxon>Eukaryota</taxon>
        <taxon>Metazoa</taxon>
        <taxon>Chordata</taxon>
        <taxon>Craniata</taxon>
        <taxon>Vertebrata</taxon>
        <taxon>Euteleostomi</taxon>
        <taxon>Actinopterygii</taxon>
        <taxon>Neopterygii</taxon>
        <taxon>Teleostei</taxon>
        <taxon>Protacanthopterygii</taxon>
        <taxon>Salmoniformes</taxon>
        <taxon>Salmonidae</taxon>
        <taxon>Salmoninae</taxon>
        <taxon>Oncorhynchus</taxon>
    </lineage>
</organism>
<keyword id="KW-0903">Direct protein sequencing</keyword>
<keyword id="KW-0472">Membrane</keyword>
<keyword id="KW-0496">Mitochondrion</keyword>
<keyword id="KW-0999">Mitochondrion inner membrane</keyword>
<protein>
    <recommendedName>
        <fullName>Cytochrome c oxidase subunit 6C</fullName>
    </recommendedName>
    <alternativeName>
        <fullName>Cytochrome c oxidase polypeptide VIc</fullName>
    </alternativeName>
</protein>
<name>COX6C_ONCMY</name>
<reference key="1">
    <citation type="journal article" date="1994" name="Eur. J. Biochem.">
        <title>Identification of tissue-specific isoforms for subunits Vb and VIIa of cytochrome c oxidase isolated from rainbow trout.</title>
        <authorList>
            <person name="Freund R."/>
            <person name="Kadenbach B."/>
        </authorList>
    </citation>
    <scope>PROTEIN SEQUENCE</scope>
    <source>
        <tissue>Liver</tissue>
    </source>
</reference>
<accession>P80331</accession>
<proteinExistence type="evidence at protein level"/>
<feature type="chain" id="PRO_0000191305" description="Cytochrome c oxidase subunit 6C">
    <location>
        <begin position="1"/>
        <end position="10" status="greater than"/>
    </location>
</feature>
<feature type="non-terminal residue">
    <location>
        <position position="10"/>
    </location>
</feature>
<dbReference type="PIR" id="S43630">
    <property type="entry name" value="S43630"/>
</dbReference>
<dbReference type="UniPathway" id="UPA00705"/>
<dbReference type="Proteomes" id="UP000694395">
    <property type="component" value="Unplaced"/>
</dbReference>
<dbReference type="GO" id="GO:0005743">
    <property type="term" value="C:mitochondrial inner membrane"/>
    <property type="evidence" value="ECO:0007669"/>
    <property type="project" value="UniProtKB-SubCell"/>
</dbReference>
<dbReference type="GO" id="GO:0006119">
    <property type="term" value="P:oxidative phosphorylation"/>
    <property type="evidence" value="ECO:0007669"/>
    <property type="project" value="UniProtKB-UniPathway"/>
</dbReference>
<evidence type="ECO:0000250" key="1">
    <source>
        <dbReference type="UniProtKB" id="P04038"/>
    </source>
</evidence>
<evidence type="ECO:0000305" key="2"/>
<comment type="function">
    <text evidence="1">Component of the cytochrome c oxidase, the last enzyme in the mitochondrial electron transport chain which drives oxidative phosphorylation. The respiratory chain contains 3 multisubunit complexes succinate dehydrogenase (complex II, CII), ubiquinol-cytochrome c oxidoreductase (cytochrome b-c1 complex, complex III, CIII) and cytochrome c oxidase (complex IV, CIV), that cooperate to transfer electrons derived from NADH and succinate to molecular oxygen, creating an electrochemical gradient over the inner membrane that drives transmembrane transport and the ATP synthase. Cytochrome c oxidase is the component of the respiratory chain that catalyzes the reduction of oxygen to water. Electrons originating from reduced cytochrome c in the intermembrane space (IMS) are transferred via the dinuclear copper A center (CU(A)) of subunit 2 and heme A of subunit 1 to the active site in subunit 1, a binuclear center (BNC) formed by heme A3 and copper B (CU(B)). The BNC reduces molecular oxygen to 2 water molecules using 4 electrons from cytochrome c in the IMS and 4 protons from the mitochondrial matrix.</text>
</comment>
<comment type="pathway">
    <text evidence="1">Energy metabolism; oxidative phosphorylation.</text>
</comment>
<comment type="subunit">
    <text evidence="1">Component of the cytochrome c oxidase (complex IV, CIV), a multisubunit enzyme composed of 14 subunits. The complex is composed of a catalytic core of 3 subunits MT-CO1, MT-CO2 and MT-CO3, encoded in the mitochondrial DNA, and 11 supernumerary subunits COX4I, COX5A, COX5B, COX6A, COX6B, COX6C, COX7A, COX7B, COX7C, COX8 and NDUFA4, which are encoded in the nuclear genome. The complex exists as a monomer or a dimer and forms supercomplexes (SCs) in the inner mitochondrial membrane with NADH-ubiquinone oxidoreductase (complex I, CI) and ubiquinol-cytochrome c oxidoreductase (cytochrome b-c1 complex, complex III, CIII), resulting in different assemblies (supercomplex SCI(1)III(2)IV(1) and megacomplex MCI(2)III(2)IV(2)).</text>
</comment>
<comment type="subcellular location">
    <subcellularLocation>
        <location evidence="1">Mitochondrion inner membrane</location>
        <topology evidence="1">Single-pass membrane protein</topology>
    </subcellularLocation>
</comment>
<comment type="similarity">
    <text evidence="2">Belongs to the cytochrome c oxidase subunit 6c family.</text>
</comment>
<sequence length="10" mass="980">XLXVPAMGGL</sequence>